<gene>
    <name type="ordered locus">Bcenmc03_2526</name>
</gene>
<comment type="similarity">
    <text evidence="3">Belongs to the UPF0758 family.</text>
</comment>
<accession>B1JXB2</accession>
<proteinExistence type="inferred from homology"/>
<evidence type="ECO:0000255" key="1">
    <source>
        <dbReference type="PROSITE-ProRule" id="PRU01182"/>
    </source>
</evidence>
<evidence type="ECO:0000256" key="2">
    <source>
        <dbReference type="SAM" id="MobiDB-lite"/>
    </source>
</evidence>
<evidence type="ECO:0000305" key="3"/>
<dbReference type="EMBL" id="CP000958">
    <property type="protein sequence ID" value="ACA91687.1"/>
    <property type="molecule type" value="Genomic_DNA"/>
</dbReference>
<dbReference type="SMR" id="B1JXB2"/>
<dbReference type="GeneID" id="83049315"/>
<dbReference type="KEGG" id="bcm:Bcenmc03_2526"/>
<dbReference type="HOGENOM" id="CLU_073529_0_0_4"/>
<dbReference type="Proteomes" id="UP000002169">
    <property type="component" value="Chromosome 1"/>
</dbReference>
<dbReference type="GO" id="GO:0046872">
    <property type="term" value="F:metal ion binding"/>
    <property type="evidence" value="ECO:0007669"/>
    <property type="project" value="UniProtKB-KW"/>
</dbReference>
<dbReference type="GO" id="GO:0008237">
    <property type="term" value="F:metallopeptidase activity"/>
    <property type="evidence" value="ECO:0007669"/>
    <property type="project" value="UniProtKB-KW"/>
</dbReference>
<dbReference type="GO" id="GO:0006508">
    <property type="term" value="P:proteolysis"/>
    <property type="evidence" value="ECO:0007669"/>
    <property type="project" value="UniProtKB-KW"/>
</dbReference>
<dbReference type="CDD" id="cd08071">
    <property type="entry name" value="MPN_DUF2466"/>
    <property type="match status" value="1"/>
</dbReference>
<dbReference type="Gene3D" id="1.10.150.20">
    <property type="entry name" value="5' to 3' exonuclease, C-terminal subdomain"/>
    <property type="match status" value="1"/>
</dbReference>
<dbReference type="Gene3D" id="3.40.140.10">
    <property type="entry name" value="Cytidine Deaminase, domain 2"/>
    <property type="match status" value="1"/>
</dbReference>
<dbReference type="InterPro" id="IPR037518">
    <property type="entry name" value="MPN"/>
</dbReference>
<dbReference type="InterPro" id="IPR025657">
    <property type="entry name" value="RadC_JAB"/>
</dbReference>
<dbReference type="InterPro" id="IPR010994">
    <property type="entry name" value="RuvA_2-like"/>
</dbReference>
<dbReference type="InterPro" id="IPR001405">
    <property type="entry name" value="UPF0758"/>
</dbReference>
<dbReference type="InterPro" id="IPR020891">
    <property type="entry name" value="UPF0758_CS"/>
</dbReference>
<dbReference type="InterPro" id="IPR046778">
    <property type="entry name" value="UPF0758_N"/>
</dbReference>
<dbReference type="NCBIfam" id="NF000642">
    <property type="entry name" value="PRK00024.1"/>
    <property type="match status" value="1"/>
</dbReference>
<dbReference type="NCBIfam" id="TIGR00608">
    <property type="entry name" value="radc"/>
    <property type="match status" value="1"/>
</dbReference>
<dbReference type="PANTHER" id="PTHR30471">
    <property type="entry name" value="DNA REPAIR PROTEIN RADC"/>
    <property type="match status" value="1"/>
</dbReference>
<dbReference type="PANTHER" id="PTHR30471:SF3">
    <property type="entry name" value="UPF0758 PROTEIN YEES-RELATED"/>
    <property type="match status" value="1"/>
</dbReference>
<dbReference type="Pfam" id="PF04002">
    <property type="entry name" value="RadC"/>
    <property type="match status" value="1"/>
</dbReference>
<dbReference type="Pfam" id="PF20582">
    <property type="entry name" value="UPF0758_N"/>
    <property type="match status" value="1"/>
</dbReference>
<dbReference type="SUPFAM" id="SSF102712">
    <property type="entry name" value="JAB1/MPN domain"/>
    <property type="match status" value="1"/>
</dbReference>
<dbReference type="SUPFAM" id="SSF47781">
    <property type="entry name" value="RuvA domain 2-like"/>
    <property type="match status" value="1"/>
</dbReference>
<dbReference type="PROSITE" id="PS50249">
    <property type="entry name" value="MPN"/>
    <property type="match status" value="1"/>
</dbReference>
<dbReference type="PROSITE" id="PS01302">
    <property type="entry name" value="UPF0758"/>
    <property type="match status" value="1"/>
</dbReference>
<protein>
    <recommendedName>
        <fullName>UPF0758 protein Bcenmc03_2526</fullName>
    </recommendedName>
</protein>
<sequence length="257" mass="28521">MLSPCPILPSAECRDTADTPADPPGRVIPINRRRRRPGDWRPERPRERLLERGPAALTDDELIALLLGTGKPGHDVFVTARALVDQFGTLHGLLEATADDFEAHPGIGPARSARLVAVTEIARRMLVEKAEERMQIDSPGAVEDCLRLKIGTRQYEVFIAVYLDARNRLIDMEEIARGSLTRMAVYPREIVRRAMKHNAAALIVAHNHPSGAVQPSAEDRRLTRVLKDALELVDVRLLDHVVVGVSDTFSFARAGWL</sequence>
<keyword id="KW-0378">Hydrolase</keyword>
<keyword id="KW-0479">Metal-binding</keyword>
<keyword id="KW-0482">Metalloprotease</keyword>
<keyword id="KW-0645">Protease</keyword>
<keyword id="KW-0862">Zinc</keyword>
<organism>
    <name type="scientific">Burkholderia orbicola (strain MC0-3)</name>
    <dbReference type="NCBI Taxonomy" id="406425"/>
    <lineage>
        <taxon>Bacteria</taxon>
        <taxon>Pseudomonadati</taxon>
        <taxon>Pseudomonadota</taxon>
        <taxon>Betaproteobacteria</taxon>
        <taxon>Burkholderiales</taxon>
        <taxon>Burkholderiaceae</taxon>
        <taxon>Burkholderia</taxon>
        <taxon>Burkholderia cepacia complex</taxon>
        <taxon>Burkholderia orbicola</taxon>
    </lineage>
</organism>
<reference key="1">
    <citation type="submission" date="2008-02" db="EMBL/GenBank/DDBJ databases">
        <title>Complete sequence of chromosome 1 of Burkholderia cenocepacia MC0-3.</title>
        <authorList>
            <person name="Copeland A."/>
            <person name="Lucas S."/>
            <person name="Lapidus A."/>
            <person name="Barry K."/>
            <person name="Bruce D."/>
            <person name="Goodwin L."/>
            <person name="Glavina del Rio T."/>
            <person name="Dalin E."/>
            <person name="Tice H."/>
            <person name="Pitluck S."/>
            <person name="Chain P."/>
            <person name="Malfatti S."/>
            <person name="Shin M."/>
            <person name="Vergez L."/>
            <person name="Schmutz J."/>
            <person name="Larimer F."/>
            <person name="Land M."/>
            <person name="Hauser L."/>
            <person name="Kyrpides N."/>
            <person name="Mikhailova N."/>
            <person name="Tiedje J."/>
            <person name="Richardson P."/>
        </authorList>
    </citation>
    <scope>NUCLEOTIDE SEQUENCE [LARGE SCALE GENOMIC DNA]</scope>
    <source>
        <strain>MC0-3</strain>
    </source>
</reference>
<name>Y2526_BURO0</name>
<feature type="chain" id="PRO_1000089797" description="UPF0758 protein Bcenmc03_2526">
    <location>
        <begin position="1"/>
        <end position="257"/>
    </location>
</feature>
<feature type="domain" description="MPN" evidence="1">
    <location>
        <begin position="135"/>
        <end position="257"/>
    </location>
</feature>
<feature type="region of interest" description="Disordered" evidence="2">
    <location>
        <begin position="1"/>
        <end position="53"/>
    </location>
</feature>
<feature type="short sequence motif" description="JAMM motif" evidence="1">
    <location>
        <begin position="206"/>
        <end position="219"/>
    </location>
</feature>
<feature type="compositionally biased region" description="Basic and acidic residues" evidence="2">
    <location>
        <begin position="37"/>
        <end position="51"/>
    </location>
</feature>
<feature type="binding site" evidence="1">
    <location>
        <position position="206"/>
    </location>
    <ligand>
        <name>Zn(2+)</name>
        <dbReference type="ChEBI" id="CHEBI:29105"/>
        <note>catalytic</note>
    </ligand>
</feature>
<feature type="binding site" evidence="1">
    <location>
        <position position="208"/>
    </location>
    <ligand>
        <name>Zn(2+)</name>
        <dbReference type="ChEBI" id="CHEBI:29105"/>
        <note>catalytic</note>
    </ligand>
</feature>
<feature type="binding site" evidence="1">
    <location>
        <position position="219"/>
    </location>
    <ligand>
        <name>Zn(2+)</name>
        <dbReference type="ChEBI" id="CHEBI:29105"/>
        <note>catalytic</note>
    </ligand>
</feature>